<comment type="function">
    <text evidence="1">One of several proteins that assist in the late maturation steps of the functional core of the 30S ribosomal subunit. Helps release RbfA from mature subunits. May play a role in the assembly of ribosomal proteins into the subunit. Circularly permuted GTPase that catalyzes slow GTP hydrolysis, GTPase activity is stimulated by the 30S ribosomal subunit.</text>
</comment>
<comment type="cofactor">
    <cofactor evidence="1">
        <name>Zn(2+)</name>
        <dbReference type="ChEBI" id="CHEBI:29105"/>
    </cofactor>
    <text evidence="1">Binds 1 zinc ion per subunit.</text>
</comment>
<comment type="subunit">
    <text evidence="1">Monomer. Associates with 30S ribosomal subunit, binds 16S rRNA.</text>
</comment>
<comment type="subcellular location">
    <subcellularLocation>
        <location evidence="1">Cytoplasm</location>
    </subcellularLocation>
</comment>
<comment type="similarity">
    <text evidence="1">Belongs to the TRAFAC class YlqF/YawG GTPase family. RsgA subfamily.</text>
</comment>
<accession>Q5FJH9</accession>
<name>RSGA_LACAC</name>
<proteinExistence type="inferred from homology"/>
<sequence length="296" mass="33657">MKLAQGTVVGLIAGYYDVETATGIVRTRARGVFRQKKQKPAVGDRVEIQIDDKGMSYLVEILPRINRIGRPAVANVSHVLLVISAVEPDFSLELLDRFLTFFSWQKVNVTIYLSKADLISEQRLNEIKESLDYYQKIGYPVFIDYHHLEEKIGDMIKDNQIWTLAGQSGAGKSTLLNHLKKDANQTTGAISTSLNRGKHTTRKVELFKLGHGFLADTPGFSSIDLTPIKLNELCNYFIEFKRASKKCKFRGCQHIKEPGCEVKKLLEEGKILHSRYDDYLAMRTEINEGRMPEYLK</sequence>
<gene>
    <name evidence="1" type="primary">rsgA</name>
    <name type="ordered locus">LBA1316</name>
</gene>
<reference key="1">
    <citation type="journal article" date="2005" name="Proc. Natl. Acad. Sci. U.S.A.">
        <title>Complete genome sequence of the probiotic lactic acid bacterium Lactobacillus acidophilus NCFM.</title>
        <authorList>
            <person name="Altermann E."/>
            <person name="Russell W.M."/>
            <person name="Azcarate-Peril M.A."/>
            <person name="Barrangou R."/>
            <person name="Buck B.L."/>
            <person name="McAuliffe O."/>
            <person name="Souther N."/>
            <person name="Dobson A."/>
            <person name="Duong T."/>
            <person name="Callanan M."/>
            <person name="Lick S."/>
            <person name="Hamrick A."/>
            <person name="Cano R."/>
            <person name="Klaenhammer T.R."/>
        </authorList>
    </citation>
    <scope>NUCLEOTIDE SEQUENCE [LARGE SCALE GENOMIC DNA]</scope>
    <source>
        <strain>ATCC 700396 / NCK56 / N2 / NCFM</strain>
    </source>
</reference>
<protein>
    <recommendedName>
        <fullName evidence="1">Small ribosomal subunit biogenesis GTPase RsgA</fullName>
        <ecNumber evidence="1">3.6.1.-</ecNumber>
    </recommendedName>
</protein>
<feature type="chain" id="PRO_1000188090" description="Small ribosomal subunit biogenesis GTPase RsgA">
    <location>
        <begin position="1"/>
        <end position="296"/>
    </location>
</feature>
<feature type="domain" description="CP-type G" evidence="2">
    <location>
        <begin position="65"/>
        <end position="223"/>
    </location>
</feature>
<feature type="binding site" evidence="1">
    <location>
        <begin position="114"/>
        <end position="117"/>
    </location>
    <ligand>
        <name>GTP</name>
        <dbReference type="ChEBI" id="CHEBI:37565"/>
    </ligand>
</feature>
<feature type="binding site" evidence="1">
    <location>
        <begin position="166"/>
        <end position="174"/>
    </location>
    <ligand>
        <name>GTP</name>
        <dbReference type="ChEBI" id="CHEBI:37565"/>
    </ligand>
</feature>
<feature type="binding site" evidence="1">
    <location>
        <position position="247"/>
    </location>
    <ligand>
        <name>Zn(2+)</name>
        <dbReference type="ChEBI" id="CHEBI:29105"/>
    </ligand>
</feature>
<feature type="binding site" evidence="1">
    <location>
        <position position="252"/>
    </location>
    <ligand>
        <name>Zn(2+)</name>
        <dbReference type="ChEBI" id="CHEBI:29105"/>
    </ligand>
</feature>
<feature type="binding site" evidence="1">
    <location>
        <position position="254"/>
    </location>
    <ligand>
        <name>Zn(2+)</name>
        <dbReference type="ChEBI" id="CHEBI:29105"/>
    </ligand>
</feature>
<feature type="binding site" evidence="1">
    <location>
        <position position="260"/>
    </location>
    <ligand>
        <name>Zn(2+)</name>
        <dbReference type="ChEBI" id="CHEBI:29105"/>
    </ligand>
</feature>
<organism>
    <name type="scientific">Lactobacillus acidophilus (strain ATCC 700396 / NCK56 / N2 / NCFM)</name>
    <dbReference type="NCBI Taxonomy" id="272621"/>
    <lineage>
        <taxon>Bacteria</taxon>
        <taxon>Bacillati</taxon>
        <taxon>Bacillota</taxon>
        <taxon>Bacilli</taxon>
        <taxon>Lactobacillales</taxon>
        <taxon>Lactobacillaceae</taxon>
        <taxon>Lactobacillus</taxon>
    </lineage>
</organism>
<dbReference type="EC" id="3.6.1.-" evidence="1"/>
<dbReference type="EMBL" id="CP000033">
    <property type="protein sequence ID" value="AAV43145.1"/>
    <property type="molecule type" value="Genomic_DNA"/>
</dbReference>
<dbReference type="RefSeq" id="WP_003547915.1">
    <property type="nucleotide sequence ID" value="NC_006814.3"/>
</dbReference>
<dbReference type="RefSeq" id="YP_194176.1">
    <property type="nucleotide sequence ID" value="NC_006814.3"/>
</dbReference>
<dbReference type="SMR" id="Q5FJH9"/>
<dbReference type="STRING" id="272621.LBA1316"/>
<dbReference type="GeneID" id="93289599"/>
<dbReference type="KEGG" id="lac:LBA1316"/>
<dbReference type="PATRIC" id="fig|272621.13.peg.1246"/>
<dbReference type="eggNOG" id="COG1162">
    <property type="taxonomic scope" value="Bacteria"/>
</dbReference>
<dbReference type="HOGENOM" id="CLU_033617_2_1_9"/>
<dbReference type="OrthoDB" id="9809485at2"/>
<dbReference type="BioCyc" id="LACI272621:G1G49-1295-MONOMER"/>
<dbReference type="Proteomes" id="UP000006381">
    <property type="component" value="Chromosome"/>
</dbReference>
<dbReference type="GO" id="GO:0005737">
    <property type="term" value="C:cytoplasm"/>
    <property type="evidence" value="ECO:0007669"/>
    <property type="project" value="UniProtKB-SubCell"/>
</dbReference>
<dbReference type="GO" id="GO:0005525">
    <property type="term" value="F:GTP binding"/>
    <property type="evidence" value="ECO:0007669"/>
    <property type="project" value="UniProtKB-UniRule"/>
</dbReference>
<dbReference type="GO" id="GO:0003924">
    <property type="term" value="F:GTPase activity"/>
    <property type="evidence" value="ECO:0007669"/>
    <property type="project" value="UniProtKB-UniRule"/>
</dbReference>
<dbReference type="GO" id="GO:0046872">
    <property type="term" value="F:metal ion binding"/>
    <property type="evidence" value="ECO:0007669"/>
    <property type="project" value="UniProtKB-KW"/>
</dbReference>
<dbReference type="GO" id="GO:0019843">
    <property type="term" value="F:rRNA binding"/>
    <property type="evidence" value="ECO:0007669"/>
    <property type="project" value="UniProtKB-KW"/>
</dbReference>
<dbReference type="GO" id="GO:0042274">
    <property type="term" value="P:ribosomal small subunit biogenesis"/>
    <property type="evidence" value="ECO:0007669"/>
    <property type="project" value="UniProtKB-UniRule"/>
</dbReference>
<dbReference type="CDD" id="cd04466">
    <property type="entry name" value="S1_YloQ_GTPase"/>
    <property type="match status" value="1"/>
</dbReference>
<dbReference type="CDD" id="cd01854">
    <property type="entry name" value="YjeQ_EngC"/>
    <property type="match status" value="1"/>
</dbReference>
<dbReference type="Gene3D" id="2.40.50.140">
    <property type="entry name" value="Nucleic acid-binding proteins"/>
    <property type="match status" value="1"/>
</dbReference>
<dbReference type="Gene3D" id="3.40.50.300">
    <property type="entry name" value="P-loop containing nucleotide triphosphate hydrolases"/>
    <property type="match status" value="1"/>
</dbReference>
<dbReference type="Gene3D" id="1.10.40.50">
    <property type="entry name" value="Probable gtpase engc, domain 3"/>
    <property type="match status" value="1"/>
</dbReference>
<dbReference type="HAMAP" id="MF_01820">
    <property type="entry name" value="GTPase_RsgA"/>
    <property type="match status" value="1"/>
</dbReference>
<dbReference type="InterPro" id="IPR030378">
    <property type="entry name" value="G_CP_dom"/>
</dbReference>
<dbReference type="InterPro" id="IPR012340">
    <property type="entry name" value="NA-bd_OB-fold"/>
</dbReference>
<dbReference type="InterPro" id="IPR027417">
    <property type="entry name" value="P-loop_NTPase"/>
</dbReference>
<dbReference type="InterPro" id="IPR004881">
    <property type="entry name" value="Ribosome_biogen_GTPase_RsgA"/>
</dbReference>
<dbReference type="InterPro" id="IPR010914">
    <property type="entry name" value="RsgA_GTPase_dom"/>
</dbReference>
<dbReference type="InterPro" id="IPR031944">
    <property type="entry name" value="RsgA_N"/>
</dbReference>
<dbReference type="NCBIfam" id="TIGR00157">
    <property type="entry name" value="ribosome small subunit-dependent GTPase A"/>
    <property type="match status" value="1"/>
</dbReference>
<dbReference type="PANTHER" id="PTHR32120">
    <property type="entry name" value="SMALL RIBOSOMAL SUBUNIT BIOGENESIS GTPASE RSGA"/>
    <property type="match status" value="1"/>
</dbReference>
<dbReference type="PANTHER" id="PTHR32120:SF11">
    <property type="entry name" value="SMALL RIBOSOMAL SUBUNIT BIOGENESIS GTPASE RSGA 1, MITOCHONDRIAL-RELATED"/>
    <property type="match status" value="1"/>
</dbReference>
<dbReference type="Pfam" id="PF03193">
    <property type="entry name" value="RsgA_GTPase"/>
    <property type="match status" value="1"/>
</dbReference>
<dbReference type="Pfam" id="PF16745">
    <property type="entry name" value="RsgA_N"/>
    <property type="match status" value="1"/>
</dbReference>
<dbReference type="SUPFAM" id="SSF50249">
    <property type="entry name" value="Nucleic acid-binding proteins"/>
    <property type="match status" value="1"/>
</dbReference>
<dbReference type="SUPFAM" id="SSF52540">
    <property type="entry name" value="P-loop containing nucleoside triphosphate hydrolases"/>
    <property type="match status" value="1"/>
</dbReference>
<dbReference type="PROSITE" id="PS50936">
    <property type="entry name" value="ENGC_GTPASE"/>
    <property type="match status" value="1"/>
</dbReference>
<dbReference type="PROSITE" id="PS51721">
    <property type="entry name" value="G_CP"/>
    <property type="match status" value="1"/>
</dbReference>
<keyword id="KW-0963">Cytoplasm</keyword>
<keyword id="KW-0342">GTP-binding</keyword>
<keyword id="KW-0378">Hydrolase</keyword>
<keyword id="KW-0479">Metal-binding</keyword>
<keyword id="KW-0547">Nucleotide-binding</keyword>
<keyword id="KW-1185">Reference proteome</keyword>
<keyword id="KW-0690">Ribosome biogenesis</keyword>
<keyword id="KW-0694">RNA-binding</keyword>
<keyword id="KW-0699">rRNA-binding</keyword>
<keyword id="KW-0862">Zinc</keyword>
<evidence type="ECO:0000255" key="1">
    <source>
        <dbReference type="HAMAP-Rule" id="MF_01820"/>
    </source>
</evidence>
<evidence type="ECO:0000255" key="2">
    <source>
        <dbReference type="PROSITE-ProRule" id="PRU01058"/>
    </source>
</evidence>